<organism>
    <name type="scientific">Yersinia pestis bv. Antiqua (strain Angola)</name>
    <dbReference type="NCBI Taxonomy" id="349746"/>
    <lineage>
        <taxon>Bacteria</taxon>
        <taxon>Pseudomonadati</taxon>
        <taxon>Pseudomonadota</taxon>
        <taxon>Gammaproteobacteria</taxon>
        <taxon>Enterobacterales</taxon>
        <taxon>Yersiniaceae</taxon>
        <taxon>Yersinia</taxon>
    </lineage>
</organism>
<accession>A9R6I7</accession>
<evidence type="ECO:0000255" key="1">
    <source>
        <dbReference type="HAMAP-Rule" id="MF_00470"/>
    </source>
</evidence>
<gene>
    <name evidence="1" type="primary">menC</name>
    <name type="ordered locus">YpAngola_A1782</name>
</gene>
<comment type="function">
    <text evidence="1">Converts 2-succinyl-6-hydroxy-2,4-cyclohexadiene-1-carboxylate (SHCHC) to 2-succinylbenzoate (OSB).</text>
</comment>
<comment type="catalytic activity">
    <reaction evidence="1">
        <text>(1R,6R)-6-hydroxy-2-succinyl-cyclohexa-2,4-diene-1-carboxylate = 2-succinylbenzoate + H2O</text>
        <dbReference type="Rhea" id="RHEA:10196"/>
        <dbReference type="ChEBI" id="CHEBI:15377"/>
        <dbReference type="ChEBI" id="CHEBI:18325"/>
        <dbReference type="ChEBI" id="CHEBI:58689"/>
        <dbReference type="EC" id="4.2.1.113"/>
    </reaction>
</comment>
<comment type="cofactor">
    <cofactor evidence="1">
        <name>a divalent metal cation</name>
        <dbReference type="ChEBI" id="CHEBI:60240"/>
    </cofactor>
</comment>
<comment type="pathway">
    <text evidence="1">Quinol/quinone metabolism; 1,4-dihydroxy-2-naphthoate biosynthesis; 1,4-dihydroxy-2-naphthoate from chorismate: step 4/7.</text>
</comment>
<comment type="pathway">
    <text evidence="1">Quinol/quinone metabolism; menaquinone biosynthesis.</text>
</comment>
<comment type="similarity">
    <text evidence="1">Belongs to the mandelate racemase/muconate lactonizing enzyme family. MenC type 1 subfamily.</text>
</comment>
<keyword id="KW-0456">Lyase</keyword>
<keyword id="KW-0460">Magnesium</keyword>
<keyword id="KW-0474">Menaquinone biosynthesis</keyword>
<keyword id="KW-0479">Metal-binding</keyword>
<sequence>MRTATLYRYSVPMEAGVILRHQRLKSRDGLLVKLQQGELSGWGEIAPLPEFSQETLDQAQVAAECWLQHWVSGVESDDSVLPSVAFGLSCAQAELKQTLPLSADYRKAPLCTGDPDELFAVLQALPGEKVAKVKVGLYEAVRDGMIVNVLLEALPDLTLRLDANRSWSRAKADGFAKYVNPALRSRIAFLEEPCKTRAESREFAQDTGIAIAWDESVREADFQVEAEPGVAAIVIKPTLVGSLARCQQLVQQAHQAGLVAVISSSIESSLGLTQLARLAAWLTPVTVPGLDTLDLMQAQVVRPWPDSPLPLITTEQLGVVWHR</sequence>
<protein>
    <recommendedName>
        <fullName evidence="1">o-succinylbenzoate synthase</fullName>
        <shortName evidence="1">OSB synthase</shortName>
        <shortName evidence="1">OSBS</shortName>
        <ecNumber evidence="1">4.2.1.113</ecNumber>
    </recommendedName>
    <alternativeName>
        <fullName evidence="1">4-(2'-carboxyphenyl)-4-oxybutyric acid synthase</fullName>
    </alternativeName>
    <alternativeName>
        <fullName evidence="1">o-succinylbenzoic acid synthase</fullName>
    </alternativeName>
</protein>
<proteinExistence type="inferred from homology"/>
<feature type="chain" id="PRO_1000125589" description="o-succinylbenzoate synthase">
    <location>
        <begin position="1"/>
        <end position="323"/>
    </location>
</feature>
<feature type="active site" description="Proton donor" evidence="1">
    <location>
        <position position="134"/>
    </location>
</feature>
<feature type="active site" description="Proton acceptor" evidence="1">
    <location>
        <position position="236"/>
    </location>
</feature>
<feature type="binding site" evidence="1">
    <location>
        <position position="162"/>
    </location>
    <ligand>
        <name>Mg(2+)</name>
        <dbReference type="ChEBI" id="CHEBI:18420"/>
    </ligand>
</feature>
<feature type="binding site" evidence="1">
    <location>
        <position position="191"/>
    </location>
    <ligand>
        <name>Mg(2+)</name>
        <dbReference type="ChEBI" id="CHEBI:18420"/>
    </ligand>
</feature>
<feature type="binding site" evidence="1">
    <location>
        <position position="214"/>
    </location>
    <ligand>
        <name>Mg(2+)</name>
        <dbReference type="ChEBI" id="CHEBI:18420"/>
    </ligand>
</feature>
<dbReference type="EC" id="4.2.1.113" evidence="1"/>
<dbReference type="EMBL" id="CP000901">
    <property type="protein sequence ID" value="ABX86923.1"/>
    <property type="molecule type" value="Genomic_DNA"/>
</dbReference>
<dbReference type="RefSeq" id="WP_002210244.1">
    <property type="nucleotide sequence ID" value="NZ_CP009935.1"/>
</dbReference>
<dbReference type="SMR" id="A9R6I7"/>
<dbReference type="GeneID" id="57976163"/>
<dbReference type="KEGG" id="ypg:YpAngola_A1782"/>
<dbReference type="PATRIC" id="fig|349746.12.peg.2756"/>
<dbReference type="UniPathway" id="UPA00079"/>
<dbReference type="UniPathway" id="UPA01057">
    <property type="reaction ID" value="UER00165"/>
</dbReference>
<dbReference type="GO" id="GO:0000287">
    <property type="term" value="F:magnesium ion binding"/>
    <property type="evidence" value="ECO:0007669"/>
    <property type="project" value="UniProtKB-UniRule"/>
</dbReference>
<dbReference type="GO" id="GO:0043748">
    <property type="term" value="F:O-succinylbenzoate synthase activity"/>
    <property type="evidence" value="ECO:0007669"/>
    <property type="project" value="UniProtKB-EC"/>
</dbReference>
<dbReference type="GO" id="GO:0009234">
    <property type="term" value="P:menaquinone biosynthetic process"/>
    <property type="evidence" value="ECO:0007669"/>
    <property type="project" value="UniProtKB-UniRule"/>
</dbReference>
<dbReference type="CDD" id="cd03320">
    <property type="entry name" value="OSBS"/>
    <property type="match status" value="1"/>
</dbReference>
<dbReference type="Gene3D" id="3.20.20.120">
    <property type="entry name" value="Enolase-like C-terminal domain"/>
    <property type="match status" value="1"/>
</dbReference>
<dbReference type="Gene3D" id="3.30.390.10">
    <property type="entry name" value="Enolase-like, N-terminal domain"/>
    <property type="match status" value="1"/>
</dbReference>
<dbReference type="HAMAP" id="MF_00470">
    <property type="entry name" value="MenC_1"/>
    <property type="match status" value="1"/>
</dbReference>
<dbReference type="InterPro" id="IPR036849">
    <property type="entry name" value="Enolase-like_C_sf"/>
</dbReference>
<dbReference type="InterPro" id="IPR029017">
    <property type="entry name" value="Enolase-like_N"/>
</dbReference>
<dbReference type="InterPro" id="IPR029065">
    <property type="entry name" value="Enolase_C-like"/>
</dbReference>
<dbReference type="InterPro" id="IPR013342">
    <property type="entry name" value="Mandelate_racemase_C"/>
</dbReference>
<dbReference type="InterPro" id="IPR010196">
    <property type="entry name" value="OSB_synthase_MenC1"/>
</dbReference>
<dbReference type="InterPro" id="IPR041338">
    <property type="entry name" value="OSBS_N"/>
</dbReference>
<dbReference type="NCBIfam" id="TIGR01927">
    <property type="entry name" value="menC_gam_Gplu"/>
    <property type="match status" value="1"/>
</dbReference>
<dbReference type="NCBIfam" id="NF003473">
    <property type="entry name" value="PRK05105.1"/>
    <property type="match status" value="1"/>
</dbReference>
<dbReference type="PANTHER" id="PTHR48073:SF2">
    <property type="entry name" value="O-SUCCINYLBENZOATE SYNTHASE"/>
    <property type="match status" value="1"/>
</dbReference>
<dbReference type="PANTHER" id="PTHR48073">
    <property type="entry name" value="O-SUCCINYLBENZOATE SYNTHASE-RELATED"/>
    <property type="match status" value="1"/>
</dbReference>
<dbReference type="Pfam" id="PF21508">
    <property type="entry name" value="MenC_N"/>
    <property type="match status" value="1"/>
</dbReference>
<dbReference type="Pfam" id="PF13378">
    <property type="entry name" value="MR_MLE_C"/>
    <property type="match status" value="1"/>
</dbReference>
<dbReference type="SFLD" id="SFLDS00001">
    <property type="entry name" value="Enolase"/>
    <property type="match status" value="1"/>
</dbReference>
<dbReference type="SFLD" id="SFLDF00009">
    <property type="entry name" value="o-succinylbenzoate_synthase"/>
    <property type="match status" value="1"/>
</dbReference>
<dbReference type="SMART" id="SM00922">
    <property type="entry name" value="MR_MLE"/>
    <property type="match status" value="1"/>
</dbReference>
<dbReference type="SUPFAM" id="SSF51604">
    <property type="entry name" value="Enolase C-terminal domain-like"/>
    <property type="match status" value="1"/>
</dbReference>
<dbReference type="SUPFAM" id="SSF54826">
    <property type="entry name" value="Enolase N-terminal domain-like"/>
    <property type="match status" value="1"/>
</dbReference>
<reference key="1">
    <citation type="journal article" date="2010" name="J. Bacteriol.">
        <title>Genome sequence of the deep-rooted Yersinia pestis strain Angola reveals new insights into the evolution and pangenome of the plague bacterium.</title>
        <authorList>
            <person name="Eppinger M."/>
            <person name="Worsham P.L."/>
            <person name="Nikolich M.P."/>
            <person name="Riley D.R."/>
            <person name="Sebastian Y."/>
            <person name="Mou S."/>
            <person name="Achtman M."/>
            <person name="Lindler L.E."/>
            <person name="Ravel J."/>
        </authorList>
    </citation>
    <scope>NUCLEOTIDE SEQUENCE [LARGE SCALE GENOMIC DNA]</scope>
    <source>
        <strain>Angola</strain>
    </source>
</reference>
<name>MENC_YERPG</name>